<comment type="function">
    <text evidence="2 4">A methylase that recognizes the double-stranded sequence 5'-CAATTG-3', methylates A-3 on both strands, and protects the DNA from cleavage by the MunI endonuclease.</text>
</comment>
<comment type="catalytic activity">
    <reaction>
        <text>a 2'-deoxyadenosine in DNA + S-adenosyl-L-methionine = an N(6)-methyl-2'-deoxyadenosine in DNA + S-adenosyl-L-homocysteine + H(+)</text>
        <dbReference type="Rhea" id="RHEA:15197"/>
        <dbReference type="Rhea" id="RHEA-COMP:12418"/>
        <dbReference type="Rhea" id="RHEA-COMP:12419"/>
        <dbReference type="ChEBI" id="CHEBI:15378"/>
        <dbReference type="ChEBI" id="CHEBI:57856"/>
        <dbReference type="ChEBI" id="CHEBI:59789"/>
        <dbReference type="ChEBI" id="CHEBI:90615"/>
        <dbReference type="ChEBI" id="CHEBI:90616"/>
        <dbReference type="EC" id="2.1.1.72"/>
    </reaction>
</comment>
<comment type="similarity">
    <text evidence="1">Belongs to the MT-A70-like family.</text>
</comment>
<gene>
    <name evidence="3" type="primary">munIM</name>
</gene>
<proteinExistence type="inferred from homology"/>
<reference key="1">
    <citation type="journal article" date="1994" name="Gene">
        <title>CAATTG-specific restriction-modification munI genes from Mycoplasma: sequence similarities between R.MunI and R.EcoRI.</title>
        <authorList>
            <person name="Siksnys V."/>
            <person name="Zareckaja N."/>
            <person name="Vaisvila R."/>
            <person name="Timinskas A."/>
            <person name="Stakenas P."/>
            <person name="Butkus V."/>
            <person name="Janulaitis A."/>
        </authorList>
    </citation>
    <scope>NUCLEOTIDE SEQUENCE [GENOMIC DNA]</scope>
    <scope>FUNCTION</scope>
</reference>
<reference key="2">
    <citation type="journal article" date="2003" name="Nucleic Acids Res.">
        <title>A nomenclature for restriction enzymes, DNA methyltransferases, homing endonucleases and their genes.</title>
        <authorList>
            <person name="Roberts R.J."/>
            <person name="Belfort M."/>
            <person name="Bestor T."/>
            <person name="Bhagwat A.S."/>
            <person name="Bickle T.A."/>
            <person name="Bitinaite J."/>
            <person name="Blumenthal R.M."/>
            <person name="Degtyarev S.K."/>
            <person name="Dryden D.T."/>
            <person name="Dybvig K."/>
            <person name="Firman K."/>
            <person name="Gromova E.S."/>
            <person name="Gumport R.I."/>
            <person name="Halford S.E."/>
            <person name="Hattman S."/>
            <person name="Heitman J."/>
            <person name="Hornby D.P."/>
            <person name="Janulaitis A."/>
            <person name="Jeltsch A."/>
            <person name="Josephsen J."/>
            <person name="Kiss A."/>
            <person name="Klaenhammer T.R."/>
            <person name="Kobayashi I."/>
            <person name="Kong H."/>
            <person name="Krueger D.H."/>
            <person name="Lacks S."/>
            <person name="Marinus M.G."/>
            <person name="Miyahara M."/>
            <person name="Morgan R.D."/>
            <person name="Murray N.E."/>
            <person name="Nagaraja V."/>
            <person name="Piekarowicz A."/>
            <person name="Pingoud A."/>
            <person name="Raleigh E."/>
            <person name="Rao D.N."/>
            <person name="Reich N."/>
            <person name="Repin V.E."/>
            <person name="Selker E.U."/>
            <person name="Shaw P.C."/>
            <person name="Stein D.C."/>
            <person name="Stoddard B.L."/>
            <person name="Szybalski W."/>
            <person name="Trautner T.A."/>
            <person name="Van Etten J.L."/>
            <person name="Vitor J.M."/>
            <person name="Wilson G.G."/>
            <person name="Xu S.Y."/>
        </authorList>
    </citation>
    <scope>NOMENCLATURE</scope>
</reference>
<accession>P43641</accession>
<name>MTMU_MYCSP</name>
<evidence type="ECO:0000255" key="1">
    <source>
        <dbReference type="PROSITE-ProRule" id="PRU00489"/>
    </source>
</evidence>
<evidence type="ECO:0000303" key="2">
    <source>
    </source>
</evidence>
<evidence type="ECO:0000303" key="3">
    <source>
    </source>
</evidence>
<evidence type="ECO:0000305" key="4">
    <source>
    </source>
</evidence>
<organism>
    <name type="scientific">Mycoplasma sp</name>
    <dbReference type="NCBI Taxonomy" id="2108"/>
    <lineage>
        <taxon>Bacteria</taxon>
        <taxon>Bacillati</taxon>
        <taxon>Mycoplasmatota</taxon>
        <taxon>Mollicutes</taxon>
        <taxon>Mycoplasmataceae</taxon>
        <taxon>Mycoplasma</taxon>
    </lineage>
</organism>
<dbReference type="EC" id="2.1.1.72"/>
<dbReference type="EMBL" id="X76192">
    <property type="protein sequence ID" value="CAA53786.1"/>
    <property type="molecule type" value="Genomic_DNA"/>
</dbReference>
<dbReference type="PIR" id="S38899">
    <property type="entry name" value="S38899"/>
</dbReference>
<dbReference type="SMR" id="P43641"/>
<dbReference type="REBASE" id="3449">
    <property type="entry name" value="M.MunI"/>
</dbReference>
<dbReference type="PRO" id="PR:P43641"/>
<dbReference type="GO" id="GO:0003677">
    <property type="term" value="F:DNA binding"/>
    <property type="evidence" value="ECO:0007669"/>
    <property type="project" value="UniProtKB-KW"/>
</dbReference>
<dbReference type="GO" id="GO:0009007">
    <property type="term" value="F:site-specific DNA-methyltransferase (adenine-specific) activity"/>
    <property type="evidence" value="ECO:0007669"/>
    <property type="project" value="UniProtKB-EC"/>
</dbReference>
<dbReference type="GO" id="GO:0009307">
    <property type="term" value="P:DNA restriction-modification system"/>
    <property type="evidence" value="ECO:0007669"/>
    <property type="project" value="UniProtKB-KW"/>
</dbReference>
<dbReference type="GO" id="GO:0032259">
    <property type="term" value="P:methylation"/>
    <property type="evidence" value="ECO:0007669"/>
    <property type="project" value="UniProtKB-KW"/>
</dbReference>
<dbReference type="Gene3D" id="3.40.50.150">
    <property type="entry name" value="Vaccinia Virus protein VP39"/>
    <property type="match status" value="1"/>
</dbReference>
<dbReference type="InterPro" id="IPR002052">
    <property type="entry name" value="DNA_methylase_N6_adenine_CS"/>
</dbReference>
<dbReference type="InterPro" id="IPR007757">
    <property type="entry name" value="MT-A70-like"/>
</dbReference>
<dbReference type="InterPro" id="IPR029063">
    <property type="entry name" value="SAM-dependent_MTases_sf"/>
</dbReference>
<dbReference type="PANTHER" id="PTHR12829">
    <property type="entry name" value="N6-ADENOSINE-METHYLTRANSFERASE"/>
    <property type="match status" value="1"/>
</dbReference>
<dbReference type="PANTHER" id="PTHR12829:SF7">
    <property type="entry name" value="N6-ADENOSINE-METHYLTRANSFERASE CATALYTIC SUBUNIT"/>
    <property type="match status" value="1"/>
</dbReference>
<dbReference type="Pfam" id="PF05063">
    <property type="entry name" value="MT-A70"/>
    <property type="match status" value="1"/>
</dbReference>
<dbReference type="SUPFAM" id="SSF53335">
    <property type="entry name" value="S-adenosyl-L-methionine-dependent methyltransferases"/>
    <property type="match status" value="1"/>
</dbReference>
<dbReference type="PROSITE" id="PS51143">
    <property type="entry name" value="MT_A70"/>
    <property type="match status" value="1"/>
</dbReference>
<dbReference type="PROSITE" id="PS00092">
    <property type="entry name" value="N6_MTASE"/>
    <property type="match status" value="1"/>
</dbReference>
<sequence>MENKVTAYSIYNKKAKKNTKVNPLDEVFPQLPRKKYQVIYADPPWDYGGKMQYDKSTIKSENEGFKRDIFISSASFKYPTLKLKELQQLDVPSITADDCILFMWTTGPQMANSILLGESWGFEYKTVAFVWDKMVHNPGRYTLSQTEFVLVFKKGKIPTPRGARNVRQLLQIHRGQHSEKPYAVIDGITKMFPALDKIELFARNNFVGWDNWGLEIPDNKIEIPTQGEIDENK</sequence>
<feature type="chain" id="PRO_0000207637" description="Type II methyltransferase M.MunI">
    <location>
        <begin position="1"/>
        <end position="233"/>
    </location>
</feature>
<protein>
    <recommendedName>
        <fullName evidence="2">Type II methyltransferase M.MunI</fullName>
        <shortName evidence="3">M.MunI</shortName>
        <ecNumber>2.1.1.72</ecNumber>
    </recommendedName>
    <alternativeName>
        <fullName>Adenine-specific methyltransferase MunI</fullName>
    </alternativeName>
    <alternativeName>
        <fullName>Modification methylase MunI</fullName>
    </alternativeName>
</protein>
<keyword id="KW-0238">DNA-binding</keyword>
<keyword id="KW-0489">Methyltransferase</keyword>
<keyword id="KW-0680">Restriction system</keyword>
<keyword id="KW-0949">S-adenosyl-L-methionine</keyword>
<keyword id="KW-0808">Transferase</keyword>